<dbReference type="EMBL" id="Z26492">
    <property type="protein sequence ID" value="CAA81264.1"/>
    <property type="molecule type" value="mRNA"/>
</dbReference>
<dbReference type="PIR" id="S37239">
    <property type="entry name" value="S37239"/>
</dbReference>
<dbReference type="GO" id="GO:0046872">
    <property type="term" value="F:metal ion binding"/>
    <property type="evidence" value="ECO:0007669"/>
    <property type="project" value="UniProtKB-KW"/>
</dbReference>
<dbReference type="InterPro" id="IPR000347">
    <property type="entry name" value="Metalthion_15p"/>
</dbReference>
<dbReference type="PANTHER" id="PTHR33543">
    <property type="entry name" value="METALLOTHIONEIN-LIKE PROTEIN 2A"/>
    <property type="match status" value="1"/>
</dbReference>
<dbReference type="PANTHER" id="PTHR33543:SF33">
    <property type="entry name" value="METALLOTHIONEIN-LIKE PROTEIN 2B"/>
    <property type="match status" value="1"/>
</dbReference>
<dbReference type="Pfam" id="PF01439">
    <property type="entry name" value="Metallothio_2"/>
    <property type="match status" value="1"/>
</dbReference>
<sequence>MSCCGGNCGCGSACKCGNGCGGCKMNADLSYTESTTTETIVMGVGSAKAQFEGAEMGAESGGCKCGANCTCDPCTCK</sequence>
<comment type="function">
    <text>Metallothioneins have a high content of cysteine residues that bind various heavy metals.</text>
</comment>
<comment type="similarity">
    <text evidence="1">Belongs to the metallothionein superfamily. Type 15 family.</text>
</comment>
<accession>P43398</accession>
<proteinExistence type="inferred from homology"/>
<protein>
    <recommendedName>
        <fullName>Metallothionein-like protein 2</fullName>
    </recommendedName>
    <alternativeName>
        <fullName>Metallothionein-like protein A</fullName>
        <shortName>MT-A</shortName>
    </alternativeName>
</protein>
<keyword id="KW-0479">Metal-binding</keyword>
<keyword id="KW-0480">Metal-thiolate cluster</keyword>
<evidence type="ECO:0000305" key="1"/>
<feature type="chain" id="PRO_0000197410" description="Metallothionein-like protein 2">
    <location>
        <begin position="1"/>
        <end position="77"/>
    </location>
</feature>
<gene>
    <name type="primary">MT1A</name>
</gene>
<organism>
    <name type="scientific">Trifolium repens</name>
    <name type="common">Creeping white clover</name>
    <dbReference type="NCBI Taxonomy" id="3899"/>
    <lineage>
        <taxon>Eukaryota</taxon>
        <taxon>Viridiplantae</taxon>
        <taxon>Streptophyta</taxon>
        <taxon>Embryophyta</taxon>
        <taxon>Tracheophyta</taxon>
        <taxon>Spermatophyta</taxon>
        <taxon>Magnoliopsida</taxon>
        <taxon>eudicotyledons</taxon>
        <taxon>Gunneridae</taxon>
        <taxon>Pentapetalae</taxon>
        <taxon>rosids</taxon>
        <taxon>fabids</taxon>
        <taxon>Fabales</taxon>
        <taxon>Fabaceae</taxon>
        <taxon>Papilionoideae</taxon>
        <taxon>50 kb inversion clade</taxon>
        <taxon>NPAAA clade</taxon>
        <taxon>Hologalegina</taxon>
        <taxon>IRL clade</taxon>
        <taxon>Trifolieae</taxon>
        <taxon>Trifolium</taxon>
    </lineage>
</organism>
<name>MT2_TRIRP</name>
<reference key="1">
    <citation type="online journal article" date="1996" name="Plant Gene Register">
        <title>Isolation of two cDNA clones encoding metallothionein-like proteins from Trifolium repens L.</title>
        <authorList>
            <person name="Ellison N.W."/>
            <person name="White D.W.R."/>
        </authorList>
        <locator>PGR96-068</locator>
    </citation>
    <scope>NUCLEOTIDE SEQUENCE [MRNA]</scope>
    <source>
        <strain>cv. Huia</strain>
        <tissue>Stolon node</tissue>
    </source>
</reference>